<comment type="function">
    <text evidence="1">Binds preferentially single-stranded DNA and unwinds double-stranded DNA.</text>
</comment>
<comment type="subcellular location">
    <subcellularLocation>
        <location>Nucleus</location>
    </subcellularLocation>
    <subcellularLocation>
        <location>Chromosome</location>
    </subcellularLocation>
</comment>
<comment type="similarity">
    <text evidence="4">Belongs to the HMGB family.</text>
</comment>
<proteinExistence type="evidence at transcript level"/>
<feature type="chain" id="PRO_0000048545" description="High mobility group protein 1 homolog">
    <location>
        <begin position="1"/>
        <end position="200"/>
    </location>
</feature>
<feature type="DNA-binding region" description="HMG box 1" evidence="2">
    <location>
        <begin position="11"/>
        <end position="81"/>
    </location>
</feature>
<feature type="DNA-binding region" description="HMG box 2" evidence="2">
    <location>
        <begin position="100"/>
        <end position="168"/>
    </location>
</feature>
<feature type="region of interest" description="Disordered" evidence="3">
    <location>
        <begin position="64"/>
        <end position="103"/>
    </location>
</feature>
<feature type="region of interest" description="Disordered" evidence="3">
    <location>
        <begin position="169"/>
        <end position="200"/>
    </location>
</feature>
<feature type="compositionally biased region" description="Basic and acidic residues" evidence="3">
    <location>
        <begin position="64"/>
        <end position="86"/>
    </location>
</feature>
<feature type="compositionally biased region" description="Acidic residues" evidence="3">
    <location>
        <begin position="190"/>
        <end position="200"/>
    </location>
</feature>
<sequence length="200" mass="22834">MGKKDRDSSKPRGRMSAYAYFVQDSRAEHGKNHPNSPVRFAEFSKDCSARWKALEEKGKGVFHEKSMRDKVRYDREMQSYKPPKGEKNKRRRRRKDPDAPKRNLSAFFIFSGENRAAIKSVHPNWSVGDIAKELAVRWRAMTAGEKIPFDKGAAKDKERYIKAMAEYKAKAKPMKRQVKESSSSSSSDSSSDDSSSDDSD</sequence>
<accession>P40644</accession>
<gene>
    <name type="primary">HMG1</name>
</gene>
<dbReference type="EMBL" id="L06453">
    <property type="protein sequence ID" value="AAA91277.1"/>
    <property type="molecule type" value="mRNA"/>
</dbReference>
<dbReference type="PIR" id="JC4357">
    <property type="entry name" value="JC4357"/>
</dbReference>
<dbReference type="RefSeq" id="NP_999708.1">
    <property type="nucleotide sequence ID" value="NM_214543.1"/>
</dbReference>
<dbReference type="SMR" id="P40644"/>
<dbReference type="FunCoup" id="P40644">
    <property type="interactions" value="1814"/>
</dbReference>
<dbReference type="STRING" id="7668.P40644"/>
<dbReference type="EnsemblMetazoa" id="NM_214543">
    <property type="protein sequence ID" value="NP_999708"/>
    <property type="gene ID" value="GeneID_373332"/>
</dbReference>
<dbReference type="GeneID" id="373332"/>
<dbReference type="KEGG" id="spu:373332"/>
<dbReference type="CTD" id="373332"/>
<dbReference type="InParanoid" id="P40644"/>
<dbReference type="OMA" id="YAYFVAT"/>
<dbReference type="OrthoDB" id="1919336at2759"/>
<dbReference type="PhylomeDB" id="P40644"/>
<dbReference type="Proteomes" id="UP000007110">
    <property type="component" value="Unassembled WGS sequence"/>
</dbReference>
<dbReference type="GO" id="GO:0005694">
    <property type="term" value="C:chromosome"/>
    <property type="evidence" value="ECO:0007669"/>
    <property type="project" value="UniProtKB-SubCell"/>
</dbReference>
<dbReference type="GO" id="GO:0005634">
    <property type="term" value="C:nucleus"/>
    <property type="evidence" value="ECO:0007669"/>
    <property type="project" value="UniProtKB-SubCell"/>
</dbReference>
<dbReference type="GO" id="GO:0003677">
    <property type="term" value="F:DNA binding"/>
    <property type="evidence" value="ECO:0007669"/>
    <property type="project" value="UniProtKB-KW"/>
</dbReference>
<dbReference type="CDD" id="cd21978">
    <property type="entry name" value="HMG-box_HMGB_rpt1"/>
    <property type="match status" value="1"/>
</dbReference>
<dbReference type="FunFam" id="1.10.30.10:FF:000016">
    <property type="entry name" value="FACT complex subunit SSRP1"/>
    <property type="match status" value="1"/>
</dbReference>
<dbReference type="FunFam" id="1.10.30.10:FF:000073">
    <property type="entry name" value="High mobility group protein 1 homolog"/>
    <property type="match status" value="1"/>
</dbReference>
<dbReference type="Gene3D" id="1.10.30.10">
    <property type="entry name" value="High mobility group box domain"/>
    <property type="match status" value="2"/>
</dbReference>
<dbReference type="InterPro" id="IPR009071">
    <property type="entry name" value="HMG_box_dom"/>
</dbReference>
<dbReference type="InterPro" id="IPR036910">
    <property type="entry name" value="HMG_box_dom_sf"/>
</dbReference>
<dbReference type="InterPro" id="IPR050342">
    <property type="entry name" value="HMGB"/>
</dbReference>
<dbReference type="PANTHER" id="PTHR48112:SF32">
    <property type="entry name" value="HIGH MOBILITY GROUP PROTEIN B3"/>
    <property type="match status" value="1"/>
</dbReference>
<dbReference type="PANTHER" id="PTHR48112">
    <property type="entry name" value="HIGH MOBILITY GROUP PROTEIN DSP1"/>
    <property type="match status" value="1"/>
</dbReference>
<dbReference type="Pfam" id="PF00505">
    <property type="entry name" value="HMG_box"/>
    <property type="match status" value="1"/>
</dbReference>
<dbReference type="Pfam" id="PF09011">
    <property type="entry name" value="HMG_box_2"/>
    <property type="match status" value="1"/>
</dbReference>
<dbReference type="PRINTS" id="PR00886">
    <property type="entry name" value="HIGHMOBLTY12"/>
</dbReference>
<dbReference type="SMART" id="SM00398">
    <property type="entry name" value="HMG"/>
    <property type="match status" value="2"/>
</dbReference>
<dbReference type="SUPFAM" id="SSF47095">
    <property type="entry name" value="HMG-box"/>
    <property type="match status" value="2"/>
</dbReference>
<dbReference type="PROSITE" id="PS50118">
    <property type="entry name" value="HMG_BOX_2"/>
    <property type="match status" value="2"/>
</dbReference>
<reference key="1">
    <citation type="journal article" date="1995" name="Gene">
        <title>Purification of a high-mobility-group 1 sea-urchin protein and cloning of cDNAs.</title>
        <authorList>
            <person name="Niemeyer C.C."/>
            <person name="Foerster-Ziober A."/>
            <person name="Flytzanis C.N."/>
        </authorList>
    </citation>
    <scope>NUCLEOTIDE SEQUENCE [MRNA]</scope>
    <source>
        <tissue>Embryo</tissue>
    </source>
</reference>
<protein>
    <recommendedName>
        <fullName>High mobility group protein 1 homolog</fullName>
    </recommendedName>
</protein>
<name>HMGH_STRPU</name>
<organism>
    <name type="scientific">Strongylocentrotus purpuratus</name>
    <name type="common">Purple sea urchin</name>
    <dbReference type="NCBI Taxonomy" id="7668"/>
    <lineage>
        <taxon>Eukaryota</taxon>
        <taxon>Metazoa</taxon>
        <taxon>Echinodermata</taxon>
        <taxon>Eleutherozoa</taxon>
        <taxon>Echinozoa</taxon>
        <taxon>Echinoidea</taxon>
        <taxon>Euechinoidea</taxon>
        <taxon>Echinacea</taxon>
        <taxon>Camarodonta</taxon>
        <taxon>Echinidea</taxon>
        <taxon>Strongylocentrotidae</taxon>
        <taxon>Strongylocentrotus</taxon>
    </lineage>
</organism>
<evidence type="ECO:0000250" key="1"/>
<evidence type="ECO:0000255" key="2">
    <source>
        <dbReference type="PROSITE-ProRule" id="PRU00267"/>
    </source>
</evidence>
<evidence type="ECO:0000256" key="3">
    <source>
        <dbReference type="SAM" id="MobiDB-lite"/>
    </source>
</evidence>
<evidence type="ECO:0000305" key="4"/>
<keyword id="KW-0158">Chromosome</keyword>
<keyword id="KW-0238">DNA-binding</keyword>
<keyword id="KW-0539">Nucleus</keyword>
<keyword id="KW-1185">Reference proteome</keyword>
<keyword id="KW-0677">Repeat</keyword>